<gene>
    <name evidence="1" type="primary">rlmG</name>
    <name type="ordered locus">ESA_03495</name>
</gene>
<organism>
    <name type="scientific">Cronobacter sakazakii (strain ATCC BAA-894)</name>
    <name type="common">Enterobacter sakazakii</name>
    <dbReference type="NCBI Taxonomy" id="290339"/>
    <lineage>
        <taxon>Bacteria</taxon>
        <taxon>Pseudomonadati</taxon>
        <taxon>Pseudomonadota</taxon>
        <taxon>Gammaproteobacteria</taxon>
        <taxon>Enterobacterales</taxon>
        <taxon>Enterobacteriaceae</taxon>
        <taxon>Cronobacter</taxon>
    </lineage>
</organism>
<name>RLMG_CROS8</name>
<proteinExistence type="inferred from homology"/>
<accession>A7MIS8</accession>
<sequence length="376" mass="42016">MSQVELLNQTLTLQRFPPMPEETPLQAWEAADEYLLQQVEQPSGPVLIFNDSFGALACALAEVRPVSVNDSFIAHQATRHNLRLNDIDDSLVTMQDSLSPLPDAPELVLMKIPKQLALLEQQLRALRKVVTPQTRIIAGAKARDIHTSTLTLFEKILGPTTTTLAWKKARLIHCAFSAPALADAPETLSWKLDGTPWTIHNHASVFSRTSLDIGARFFMQHLPEAVEGEMVDLGCGNGVIGLTLLAQNPQAKVRFVDESYMAVASSRLNVETNLPEAMERCEFQVNNALTGVEPESFHAVLCNPPFHQQHAITDHIAWQMFQDARRCLKWGGELRIVGNRHLDYFRKLKKIFGNCTTVATNNKFVVLKAVKLRKSR</sequence>
<feature type="chain" id="PRO_0000366451" description="Ribosomal RNA large subunit methyltransferase G">
    <location>
        <begin position="1"/>
        <end position="376"/>
    </location>
</feature>
<dbReference type="EC" id="2.1.1.174" evidence="1"/>
<dbReference type="EMBL" id="CP000783">
    <property type="protein sequence ID" value="ABU78710.1"/>
    <property type="molecule type" value="Genomic_DNA"/>
</dbReference>
<dbReference type="RefSeq" id="WP_012125917.1">
    <property type="nucleotide sequence ID" value="NC_009778.1"/>
</dbReference>
<dbReference type="SMR" id="A7MIS8"/>
<dbReference type="KEGG" id="esa:ESA_03495"/>
<dbReference type="PATRIC" id="fig|290339.8.peg.3108"/>
<dbReference type="HOGENOM" id="CLU_040288_4_0_6"/>
<dbReference type="Proteomes" id="UP000000260">
    <property type="component" value="Chromosome"/>
</dbReference>
<dbReference type="GO" id="GO:0005737">
    <property type="term" value="C:cytoplasm"/>
    <property type="evidence" value="ECO:0007669"/>
    <property type="project" value="UniProtKB-SubCell"/>
</dbReference>
<dbReference type="GO" id="GO:0052916">
    <property type="term" value="F:23S rRNA (guanine(1835)-N(2))-methyltransferase activity"/>
    <property type="evidence" value="ECO:0007669"/>
    <property type="project" value="UniProtKB-EC"/>
</dbReference>
<dbReference type="GO" id="GO:0003676">
    <property type="term" value="F:nucleic acid binding"/>
    <property type="evidence" value="ECO:0007669"/>
    <property type="project" value="InterPro"/>
</dbReference>
<dbReference type="CDD" id="cd02440">
    <property type="entry name" value="AdoMet_MTases"/>
    <property type="match status" value="1"/>
</dbReference>
<dbReference type="FunFam" id="3.40.50.150:FF:000046">
    <property type="entry name" value="Ribosomal RNA large subunit methyltransferase G"/>
    <property type="match status" value="1"/>
</dbReference>
<dbReference type="Gene3D" id="3.40.50.150">
    <property type="entry name" value="Vaccinia Virus protein VP39"/>
    <property type="match status" value="2"/>
</dbReference>
<dbReference type="HAMAP" id="MF_01859">
    <property type="entry name" value="23SrRNA_methyltr_G"/>
    <property type="match status" value="1"/>
</dbReference>
<dbReference type="InterPro" id="IPR002052">
    <property type="entry name" value="DNA_methylase_N6_adenine_CS"/>
</dbReference>
<dbReference type="InterPro" id="IPR017237">
    <property type="entry name" value="rRNA_m2G-MeTrfase_RlmG"/>
</dbReference>
<dbReference type="InterPro" id="IPR046977">
    <property type="entry name" value="RsmC/RlmG"/>
</dbReference>
<dbReference type="InterPro" id="IPR029063">
    <property type="entry name" value="SAM-dependent_MTases_sf"/>
</dbReference>
<dbReference type="InterPro" id="IPR007848">
    <property type="entry name" value="Small_mtfrase_dom"/>
</dbReference>
<dbReference type="NCBIfam" id="NF011577">
    <property type="entry name" value="PRK15001.1"/>
    <property type="match status" value="1"/>
</dbReference>
<dbReference type="PANTHER" id="PTHR47816:SF5">
    <property type="entry name" value="RIBOSOMAL RNA LARGE SUBUNIT METHYLTRANSFERASE G"/>
    <property type="match status" value="1"/>
</dbReference>
<dbReference type="PANTHER" id="PTHR47816">
    <property type="entry name" value="RIBOSOMAL RNA SMALL SUBUNIT METHYLTRANSFERASE C"/>
    <property type="match status" value="1"/>
</dbReference>
<dbReference type="Pfam" id="PF05175">
    <property type="entry name" value="MTS"/>
    <property type="match status" value="1"/>
</dbReference>
<dbReference type="PIRSF" id="PIRSF037565">
    <property type="entry name" value="RRNA_m2G_Mtase_RsmD_prd"/>
    <property type="match status" value="1"/>
</dbReference>
<dbReference type="SUPFAM" id="SSF53335">
    <property type="entry name" value="S-adenosyl-L-methionine-dependent methyltransferases"/>
    <property type="match status" value="1"/>
</dbReference>
<keyword id="KW-0963">Cytoplasm</keyword>
<keyword id="KW-0489">Methyltransferase</keyword>
<keyword id="KW-1185">Reference proteome</keyword>
<keyword id="KW-0698">rRNA processing</keyword>
<keyword id="KW-0949">S-adenosyl-L-methionine</keyword>
<keyword id="KW-0808">Transferase</keyword>
<evidence type="ECO:0000255" key="1">
    <source>
        <dbReference type="HAMAP-Rule" id="MF_01859"/>
    </source>
</evidence>
<comment type="function">
    <text evidence="1">Specifically methylates the guanine in position 1835 (m2G1835) of 23S rRNA.</text>
</comment>
<comment type="catalytic activity">
    <reaction evidence="1">
        <text>guanosine(1835) in 23S rRNA + S-adenosyl-L-methionine = N(2)-methylguanosine(1835) in 23S rRNA + S-adenosyl-L-homocysteine + H(+)</text>
        <dbReference type="Rhea" id="RHEA:42744"/>
        <dbReference type="Rhea" id="RHEA-COMP:10217"/>
        <dbReference type="Rhea" id="RHEA-COMP:10218"/>
        <dbReference type="ChEBI" id="CHEBI:15378"/>
        <dbReference type="ChEBI" id="CHEBI:57856"/>
        <dbReference type="ChEBI" id="CHEBI:59789"/>
        <dbReference type="ChEBI" id="CHEBI:74269"/>
        <dbReference type="ChEBI" id="CHEBI:74481"/>
        <dbReference type="EC" id="2.1.1.174"/>
    </reaction>
</comment>
<comment type="subcellular location">
    <subcellularLocation>
        <location evidence="1">Cytoplasm</location>
    </subcellularLocation>
</comment>
<comment type="similarity">
    <text evidence="1">Belongs to the methyltransferase superfamily. RlmG family.</text>
</comment>
<protein>
    <recommendedName>
        <fullName evidence="1">Ribosomal RNA large subunit methyltransferase G</fullName>
        <ecNumber evidence="1">2.1.1.174</ecNumber>
    </recommendedName>
    <alternativeName>
        <fullName evidence="1">23S rRNA m2G1835 methyltransferase</fullName>
    </alternativeName>
    <alternativeName>
        <fullName evidence="1">rRNA (guanine-N(2)-)-methyltransferase RlmG</fullName>
    </alternativeName>
</protein>
<reference key="1">
    <citation type="journal article" date="2010" name="PLoS ONE">
        <title>Genome sequence of Cronobacter sakazakii BAA-894 and comparative genomic hybridization analysis with other Cronobacter species.</title>
        <authorList>
            <person name="Kucerova E."/>
            <person name="Clifton S.W."/>
            <person name="Xia X.Q."/>
            <person name="Long F."/>
            <person name="Porwollik S."/>
            <person name="Fulton L."/>
            <person name="Fronick C."/>
            <person name="Minx P."/>
            <person name="Kyung K."/>
            <person name="Warren W."/>
            <person name="Fulton R."/>
            <person name="Feng D."/>
            <person name="Wollam A."/>
            <person name="Shah N."/>
            <person name="Bhonagiri V."/>
            <person name="Nash W.E."/>
            <person name="Hallsworth-Pepin K."/>
            <person name="Wilson R.K."/>
            <person name="McClelland M."/>
            <person name="Forsythe S.J."/>
        </authorList>
    </citation>
    <scope>NUCLEOTIDE SEQUENCE [LARGE SCALE GENOMIC DNA]</scope>
    <source>
        <strain>ATCC BAA-894</strain>
    </source>
</reference>